<evidence type="ECO:0000255" key="1">
    <source>
        <dbReference type="HAMAP-Rule" id="MF_01454"/>
    </source>
</evidence>
<evidence type="ECO:0000255" key="2">
    <source>
        <dbReference type="PROSITE-ProRule" id="PRU01231"/>
    </source>
</evidence>
<evidence type="ECO:0000305" key="3"/>
<dbReference type="EC" id="3.6.5.-" evidence="1"/>
<dbReference type="EMBL" id="CP000683">
    <property type="protein sequence ID" value="ABV85269.1"/>
    <property type="status" value="ALT_INIT"/>
    <property type="molecule type" value="Genomic_DNA"/>
</dbReference>
<dbReference type="SMR" id="A8F2Y3"/>
<dbReference type="KEGG" id="rms:RMA_1329"/>
<dbReference type="HOGENOM" id="CLU_011747_2_0_5"/>
<dbReference type="Proteomes" id="UP000001311">
    <property type="component" value="Chromosome"/>
</dbReference>
<dbReference type="GO" id="GO:0005737">
    <property type="term" value="C:cytoplasm"/>
    <property type="evidence" value="ECO:0007669"/>
    <property type="project" value="UniProtKB-SubCell"/>
</dbReference>
<dbReference type="GO" id="GO:0005525">
    <property type="term" value="F:GTP binding"/>
    <property type="evidence" value="ECO:0007669"/>
    <property type="project" value="UniProtKB-UniRule"/>
</dbReference>
<dbReference type="GO" id="GO:0003924">
    <property type="term" value="F:GTPase activity"/>
    <property type="evidence" value="ECO:0007669"/>
    <property type="project" value="UniProtKB-UniRule"/>
</dbReference>
<dbReference type="GO" id="GO:0000287">
    <property type="term" value="F:magnesium ion binding"/>
    <property type="evidence" value="ECO:0007669"/>
    <property type="project" value="InterPro"/>
</dbReference>
<dbReference type="GO" id="GO:0042254">
    <property type="term" value="P:ribosome biogenesis"/>
    <property type="evidence" value="ECO:0007669"/>
    <property type="project" value="UniProtKB-UniRule"/>
</dbReference>
<dbReference type="CDD" id="cd01898">
    <property type="entry name" value="Obg"/>
    <property type="match status" value="1"/>
</dbReference>
<dbReference type="FunFam" id="2.70.210.12:FF:000001">
    <property type="entry name" value="GTPase Obg"/>
    <property type="match status" value="1"/>
</dbReference>
<dbReference type="Gene3D" id="2.70.210.12">
    <property type="entry name" value="GTP1/OBG domain"/>
    <property type="match status" value="1"/>
</dbReference>
<dbReference type="Gene3D" id="3.40.50.300">
    <property type="entry name" value="P-loop containing nucleotide triphosphate hydrolases"/>
    <property type="match status" value="1"/>
</dbReference>
<dbReference type="HAMAP" id="MF_01454">
    <property type="entry name" value="GTPase_Obg"/>
    <property type="match status" value="1"/>
</dbReference>
<dbReference type="InterPro" id="IPR031167">
    <property type="entry name" value="G_OBG"/>
</dbReference>
<dbReference type="InterPro" id="IPR006073">
    <property type="entry name" value="GTP-bd"/>
</dbReference>
<dbReference type="InterPro" id="IPR014100">
    <property type="entry name" value="GTP-bd_Obg/CgtA"/>
</dbReference>
<dbReference type="InterPro" id="IPR006074">
    <property type="entry name" value="GTP1-OBG_CS"/>
</dbReference>
<dbReference type="InterPro" id="IPR006169">
    <property type="entry name" value="GTP1_OBG_dom"/>
</dbReference>
<dbReference type="InterPro" id="IPR036726">
    <property type="entry name" value="GTP1_OBG_dom_sf"/>
</dbReference>
<dbReference type="InterPro" id="IPR045086">
    <property type="entry name" value="OBG_GTPase"/>
</dbReference>
<dbReference type="InterPro" id="IPR027417">
    <property type="entry name" value="P-loop_NTPase"/>
</dbReference>
<dbReference type="NCBIfam" id="TIGR02729">
    <property type="entry name" value="Obg_CgtA"/>
    <property type="match status" value="1"/>
</dbReference>
<dbReference type="NCBIfam" id="NF008955">
    <property type="entry name" value="PRK12297.1"/>
    <property type="match status" value="1"/>
</dbReference>
<dbReference type="NCBIfam" id="NF008956">
    <property type="entry name" value="PRK12299.1"/>
    <property type="match status" value="1"/>
</dbReference>
<dbReference type="PANTHER" id="PTHR11702">
    <property type="entry name" value="DEVELOPMENTALLY REGULATED GTP-BINDING PROTEIN-RELATED"/>
    <property type="match status" value="1"/>
</dbReference>
<dbReference type="PANTHER" id="PTHR11702:SF31">
    <property type="entry name" value="MITOCHONDRIAL RIBOSOME-ASSOCIATED GTPASE 2"/>
    <property type="match status" value="1"/>
</dbReference>
<dbReference type="Pfam" id="PF01018">
    <property type="entry name" value="GTP1_OBG"/>
    <property type="match status" value="1"/>
</dbReference>
<dbReference type="Pfam" id="PF01926">
    <property type="entry name" value="MMR_HSR1"/>
    <property type="match status" value="1"/>
</dbReference>
<dbReference type="PIRSF" id="PIRSF002401">
    <property type="entry name" value="GTP_bd_Obg/CgtA"/>
    <property type="match status" value="1"/>
</dbReference>
<dbReference type="PRINTS" id="PR00326">
    <property type="entry name" value="GTP1OBG"/>
</dbReference>
<dbReference type="SUPFAM" id="SSF82051">
    <property type="entry name" value="Obg GTP-binding protein N-terminal domain"/>
    <property type="match status" value="1"/>
</dbReference>
<dbReference type="SUPFAM" id="SSF52540">
    <property type="entry name" value="P-loop containing nucleoside triphosphate hydrolases"/>
    <property type="match status" value="1"/>
</dbReference>
<dbReference type="PROSITE" id="PS51710">
    <property type="entry name" value="G_OBG"/>
    <property type="match status" value="1"/>
</dbReference>
<dbReference type="PROSITE" id="PS00905">
    <property type="entry name" value="GTP1_OBG"/>
    <property type="match status" value="1"/>
</dbReference>
<dbReference type="PROSITE" id="PS51883">
    <property type="entry name" value="OBG"/>
    <property type="match status" value="1"/>
</dbReference>
<name>OBG_RICM5</name>
<proteinExistence type="inferred from homology"/>
<comment type="function">
    <text evidence="1">An essential GTPase which binds GTP, GDP and possibly (p)ppGpp with moderate affinity, with high nucleotide exchange rates and a fairly low GTP hydrolysis rate. Plays a role in control of the cell cycle, stress response, ribosome biogenesis and in those bacteria that undergo differentiation, in morphogenesis control.</text>
</comment>
<comment type="cofactor">
    <cofactor evidence="1">
        <name>Mg(2+)</name>
        <dbReference type="ChEBI" id="CHEBI:18420"/>
    </cofactor>
</comment>
<comment type="subunit">
    <text evidence="1">Monomer.</text>
</comment>
<comment type="subcellular location">
    <subcellularLocation>
        <location evidence="1">Cytoplasm</location>
    </subcellularLocation>
</comment>
<comment type="similarity">
    <text evidence="1">Belongs to the TRAFAC class OBG-HflX-like GTPase superfamily. OBG GTPase family.</text>
</comment>
<comment type="sequence caution" evidence="3">
    <conflict type="erroneous initiation">
        <sequence resource="EMBL-CDS" id="ABV85269"/>
    </conflict>
    <text>Extended N-terminus.</text>
</comment>
<organism>
    <name type="scientific">Rickettsia massiliae (strain Mtu5)</name>
    <dbReference type="NCBI Taxonomy" id="416276"/>
    <lineage>
        <taxon>Bacteria</taxon>
        <taxon>Pseudomonadati</taxon>
        <taxon>Pseudomonadota</taxon>
        <taxon>Alphaproteobacteria</taxon>
        <taxon>Rickettsiales</taxon>
        <taxon>Rickettsiaceae</taxon>
        <taxon>Rickettsieae</taxon>
        <taxon>Rickettsia</taxon>
        <taxon>spotted fever group</taxon>
    </lineage>
</organism>
<gene>
    <name evidence="1" type="primary">obg</name>
    <name type="ordered locus">RMA_1329</name>
</gene>
<feature type="chain" id="PRO_0000386204" description="GTPase Obg">
    <location>
        <begin position="1"/>
        <end position="330"/>
    </location>
</feature>
<feature type="domain" description="Obg" evidence="2">
    <location>
        <begin position="1"/>
        <end position="159"/>
    </location>
</feature>
<feature type="domain" description="OBG-type G" evidence="1">
    <location>
        <begin position="160"/>
        <end position="327"/>
    </location>
</feature>
<feature type="binding site" evidence="1">
    <location>
        <begin position="166"/>
        <end position="173"/>
    </location>
    <ligand>
        <name>GTP</name>
        <dbReference type="ChEBI" id="CHEBI:37565"/>
    </ligand>
</feature>
<feature type="binding site" evidence="1">
    <location>
        <position position="173"/>
    </location>
    <ligand>
        <name>Mg(2+)</name>
        <dbReference type="ChEBI" id="CHEBI:18420"/>
    </ligand>
</feature>
<feature type="binding site" evidence="1">
    <location>
        <begin position="191"/>
        <end position="195"/>
    </location>
    <ligand>
        <name>GTP</name>
        <dbReference type="ChEBI" id="CHEBI:37565"/>
    </ligand>
</feature>
<feature type="binding site" evidence="1">
    <location>
        <position position="193"/>
    </location>
    <ligand>
        <name>Mg(2+)</name>
        <dbReference type="ChEBI" id="CHEBI:18420"/>
    </ligand>
</feature>
<feature type="binding site" evidence="1">
    <location>
        <begin position="212"/>
        <end position="215"/>
    </location>
    <ligand>
        <name>GTP</name>
        <dbReference type="ChEBI" id="CHEBI:37565"/>
    </ligand>
</feature>
<feature type="binding site" evidence="1">
    <location>
        <begin position="279"/>
        <end position="282"/>
    </location>
    <ligand>
        <name>GTP</name>
        <dbReference type="ChEBI" id="CHEBI:37565"/>
    </ligand>
</feature>
<feature type="binding site" evidence="1">
    <location>
        <begin position="308"/>
        <end position="310"/>
    </location>
    <ligand>
        <name>GTP</name>
        <dbReference type="ChEBI" id="CHEBI:37565"/>
    </ligand>
</feature>
<accession>A8F2Y3</accession>
<sequence>MHFIDEVKIYIKGGNGGNGCVSFHREKFIDRGGPDGGDGGRGGSVIFRSNHHLNTLVNYRYKQHFTAENGENGKDSNRSGKSGKSLVLDVPIGTQIFSEDGNILLHDFTVDDQSFEIIKGGSGGLGNSHFKSSVNQAPRKRTEGEIAEEMWIHLSLKLLSDVGLVGFPNAGKSTFLSFVTAAKPKIADYPFTTLVPNLGVVYVDDEEFVIADIPGLIEGAHQGHGLGDKFLKHIERCNVLIHLIDGSSNDVVADYNTVRLELESYSDYLKNKIEIICLNKCDVLTDEEIQEKINKLQKVTNKEVFPISTYTNAGVNKIVKLALETIKNQE</sequence>
<keyword id="KW-0963">Cytoplasm</keyword>
<keyword id="KW-0342">GTP-binding</keyword>
<keyword id="KW-0378">Hydrolase</keyword>
<keyword id="KW-0460">Magnesium</keyword>
<keyword id="KW-0479">Metal-binding</keyword>
<keyword id="KW-0547">Nucleotide-binding</keyword>
<reference key="1">
    <citation type="journal article" date="2007" name="Genome Res.">
        <title>Lateral gene transfer between obligate intracellular bacteria: evidence from the Rickettsia massiliae genome.</title>
        <authorList>
            <person name="Blanc G."/>
            <person name="Ogata H."/>
            <person name="Robert C."/>
            <person name="Audic S."/>
            <person name="Claverie J.-M."/>
            <person name="Raoult D."/>
        </authorList>
    </citation>
    <scope>NUCLEOTIDE SEQUENCE [LARGE SCALE GENOMIC DNA]</scope>
    <source>
        <strain>Mtu5</strain>
    </source>
</reference>
<protein>
    <recommendedName>
        <fullName evidence="1">GTPase Obg</fullName>
        <ecNumber evidence="1">3.6.5.-</ecNumber>
    </recommendedName>
    <alternativeName>
        <fullName evidence="1">GTP-binding protein Obg</fullName>
    </alternativeName>
</protein>